<keyword id="KW-0067">ATP-binding</keyword>
<keyword id="KW-0963">Cytoplasm</keyword>
<keyword id="KW-0418">Kinase</keyword>
<keyword id="KW-0545">Nucleotide biosynthesis</keyword>
<keyword id="KW-0547">Nucleotide-binding</keyword>
<keyword id="KW-0808">Transferase</keyword>
<comment type="function">
    <text evidence="1">Catalyzes the reversible transfer of the terminal phosphate group between ATP and AMP. Plays an important role in cellular energy homeostasis and in adenine nucleotide metabolism.</text>
</comment>
<comment type="catalytic activity">
    <reaction evidence="1">
        <text>AMP + ATP = 2 ADP</text>
        <dbReference type="Rhea" id="RHEA:12973"/>
        <dbReference type="ChEBI" id="CHEBI:30616"/>
        <dbReference type="ChEBI" id="CHEBI:456215"/>
        <dbReference type="ChEBI" id="CHEBI:456216"/>
        <dbReference type="EC" id="2.7.4.3"/>
    </reaction>
</comment>
<comment type="pathway">
    <text evidence="1">Purine metabolism; AMP biosynthesis via salvage pathway; AMP from ADP: step 1/1.</text>
</comment>
<comment type="subunit">
    <text evidence="1">Monomer.</text>
</comment>
<comment type="subcellular location">
    <subcellularLocation>
        <location evidence="1">Cytoplasm</location>
    </subcellularLocation>
</comment>
<comment type="domain">
    <text evidence="1">Consists of three domains, a large central CORE domain and two small peripheral domains, NMPbind and LID, which undergo movements during catalysis. The LID domain closes over the site of phosphoryl transfer upon ATP binding. Assembling and dissambling the active center during each catalytic cycle provides an effective means to prevent ATP hydrolysis.</text>
</comment>
<comment type="similarity">
    <text evidence="1">Belongs to the adenylate kinase family.</text>
</comment>
<accession>Q3BPM9</accession>
<name>KAD_XANE5</name>
<sequence>MRLVLLGPPGSGKGTQATRLKDTFDIPHISTGDLLRAEVAAGSPLGLKAKEVMARGDLVSDDILLGMLEARLGQADVAKGFILDGYPRNVAQANALDELLGKIGQPLDAVVQLDVASELLVERIAGRAKAEGREDDNPESVRKRLQVYTDSTAPVIGFYEQRGKLARVDGVGSLDEVLERISKALGR</sequence>
<proteinExistence type="inferred from homology"/>
<feature type="chain" id="PRO_1000058936" description="Adenylate kinase">
    <location>
        <begin position="1"/>
        <end position="187"/>
    </location>
</feature>
<feature type="region of interest" description="NMP" evidence="1">
    <location>
        <begin position="30"/>
        <end position="59"/>
    </location>
</feature>
<feature type="region of interest" description="LID" evidence="1">
    <location>
        <begin position="126"/>
        <end position="136"/>
    </location>
</feature>
<feature type="binding site" evidence="1">
    <location>
        <begin position="10"/>
        <end position="15"/>
    </location>
    <ligand>
        <name>ATP</name>
        <dbReference type="ChEBI" id="CHEBI:30616"/>
    </ligand>
</feature>
<feature type="binding site" evidence="1">
    <location>
        <position position="31"/>
    </location>
    <ligand>
        <name>AMP</name>
        <dbReference type="ChEBI" id="CHEBI:456215"/>
    </ligand>
</feature>
<feature type="binding site" evidence="1">
    <location>
        <position position="36"/>
    </location>
    <ligand>
        <name>AMP</name>
        <dbReference type="ChEBI" id="CHEBI:456215"/>
    </ligand>
</feature>
<feature type="binding site" evidence="1">
    <location>
        <begin position="57"/>
        <end position="59"/>
    </location>
    <ligand>
        <name>AMP</name>
        <dbReference type="ChEBI" id="CHEBI:456215"/>
    </ligand>
</feature>
<feature type="binding site" evidence="1">
    <location>
        <begin position="85"/>
        <end position="88"/>
    </location>
    <ligand>
        <name>AMP</name>
        <dbReference type="ChEBI" id="CHEBI:456215"/>
    </ligand>
</feature>
<feature type="binding site" evidence="1">
    <location>
        <position position="92"/>
    </location>
    <ligand>
        <name>AMP</name>
        <dbReference type="ChEBI" id="CHEBI:456215"/>
    </ligand>
</feature>
<feature type="binding site" evidence="1">
    <location>
        <position position="127"/>
    </location>
    <ligand>
        <name>ATP</name>
        <dbReference type="ChEBI" id="CHEBI:30616"/>
    </ligand>
</feature>
<feature type="binding site" evidence="1">
    <location>
        <position position="133"/>
    </location>
    <ligand>
        <name>AMP</name>
        <dbReference type="ChEBI" id="CHEBI:456215"/>
    </ligand>
</feature>
<feature type="binding site" evidence="1">
    <location>
        <position position="144"/>
    </location>
    <ligand>
        <name>AMP</name>
        <dbReference type="ChEBI" id="CHEBI:456215"/>
    </ligand>
</feature>
<feature type="binding site" evidence="1">
    <location>
        <position position="172"/>
    </location>
    <ligand>
        <name>ATP</name>
        <dbReference type="ChEBI" id="CHEBI:30616"/>
    </ligand>
</feature>
<protein>
    <recommendedName>
        <fullName evidence="1">Adenylate kinase</fullName>
        <shortName evidence="1">AK</shortName>
        <ecNumber evidence="1">2.7.4.3</ecNumber>
    </recommendedName>
    <alternativeName>
        <fullName evidence="1">ATP-AMP transphosphorylase</fullName>
    </alternativeName>
    <alternativeName>
        <fullName evidence="1">ATP:AMP phosphotransferase</fullName>
    </alternativeName>
    <alternativeName>
        <fullName evidence="1">Adenylate monophosphate kinase</fullName>
    </alternativeName>
</protein>
<dbReference type="EC" id="2.7.4.3" evidence="1"/>
<dbReference type="EMBL" id="AM039952">
    <property type="protein sequence ID" value="CAJ25284.1"/>
    <property type="molecule type" value="Genomic_DNA"/>
</dbReference>
<dbReference type="RefSeq" id="WP_003483308.1">
    <property type="nucleotide sequence ID" value="NZ_CP017190.1"/>
</dbReference>
<dbReference type="SMR" id="Q3BPM9"/>
<dbReference type="STRING" id="456327.BJD11_04970"/>
<dbReference type="KEGG" id="xcv:XCV3553"/>
<dbReference type="eggNOG" id="COG0563">
    <property type="taxonomic scope" value="Bacteria"/>
</dbReference>
<dbReference type="HOGENOM" id="CLU_032354_4_1_6"/>
<dbReference type="UniPathway" id="UPA00588">
    <property type="reaction ID" value="UER00649"/>
</dbReference>
<dbReference type="Proteomes" id="UP000007069">
    <property type="component" value="Chromosome"/>
</dbReference>
<dbReference type="GO" id="GO:0005737">
    <property type="term" value="C:cytoplasm"/>
    <property type="evidence" value="ECO:0007669"/>
    <property type="project" value="UniProtKB-SubCell"/>
</dbReference>
<dbReference type="GO" id="GO:0004017">
    <property type="term" value="F:adenylate kinase activity"/>
    <property type="evidence" value="ECO:0007669"/>
    <property type="project" value="UniProtKB-UniRule"/>
</dbReference>
<dbReference type="GO" id="GO:0005524">
    <property type="term" value="F:ATP binding"/>
    <property type="evidence" value="ECO:0007669"/>
    <property type="project" value="UniProtKB-UniRule"/>
</dbReference>
<dbReference type="GO" id="GO:0044209">
    <property type="term" value="P:AMP salvage"/>
    <property type="evidence" value="ECO:0007669"/>
    <property type="project" value="UniProtKB-UniRule"/>
</dbReference>
<dbReference type="CDD" id="cd01428">
    <property type="entry name" value="ADK"/>
    <property type="match status" value="1"/>
</dbReference>
<dbReference type="Gene3D" id="3.40.50.300">
    <property type="entry name" value="P-loop containing nucleotide triphosphate hydrolases"/>
    <property type="match status" value="1"/>
</dbReference>
<dbReference type="HAMAP" id="MF_00235">
    <property type="entry name" value="Adenylate_kinase_Adk"/>
    <property type="match status" value="1"/>
</dbReference>
<dbReference type="InterPro" id="IPR000850">
    <property type="entry name" value="Adenylat/UMP-CMP_kin"/>
</dbReference>
<dbReference type="InterPro" id="IPR033690">
    <property type="entry name" value="Adenylat_kinase_CS"/>
</dbReference>
<dbReference type="InterPro" id="IPR027417">
    <property type="entry name" value="P-loop_NTPase"/>
</dbReference>
<dbReference type="NCBIfam" id="NF001381">
    <property type="entry name" value="PRK00279.1-3"/>
    <property type="match status" value="1"/>
</dbReference>
<dbReference type="NCBIfam" id="NF011100">
    <property type="entry name" value="PRK14527.1"/>
    <property type="match status" value="1"/>
</dbReference>
<dbReference type="NCBIfam" id="NF011101">
    <property type="entry name" value="PRK14528.1"/>
    <property type="match status" value="1"/>
</dbReference>
<dbReference type="NCBIfam" id="NF011104">
    <property type="entry name" value="PRK14531.1"/>
    <property type="match status" value="1"/>
</dbReference>
<dbReference type="NCBIfam" id="NF011105">
    <property type="entry name" value="PRK14532.1"/>
    <property type="match status" value="1"/>
</dbReference>
<dbReference type="PANTHER" id="PTHR23359">
    <property type="entry name" value="NUCLEOTIDE KINASE"/>
    <property type="match status" value="1"/>
</dbReference>
<dbReference type="Pfam" id="PF00406">
    <property type="entry name" value="ADK"/>
    <property type="match status" value="1"/>
</dbReference>
<dbReference type="PRINTS" id="PR00094">
    <property type="entry name" value="ADENYLTKNASE"/>
</dbReference>
<dbReference type="SUPFAM" id="SSF52540">
    <property type="entry name" value="P-loop containing nucleoside triphosphate hydrolases"/>
    <property type="match status" value="1"/>
</dbReference>
<dbReference type="PROSITE" id="PS00113">
    <property type="entry name" value="ADENYLATE_KINASE"/>
    <property type="match status" value="1"/>
</dbReference>
<reference key="1">
    <citation type="journal article" date="2005" name="J. Bacteriol.">
        <title>Insights into genome plasticity and pathogenicity of the plant pathogenic Bacterium Xanthomonas campestris pv. vesicatoria revealed by the complete genome sequence.</title>
        <authorList>
            <person name="Thieme F."/>
            <person name="Koebnik R."/>
            <person name="Bekel T."/>
            <person name="Berger C."/>
            <person name="Boch J."/>
            <person name="Buettner D."/>
            <person name="Caldana C."/>
            <person name="Gaigalat L."/>
            <person name="Goesmann A."/>
            <person name="Kay S."/>
            <person name="Kirchner O."/>
            <person name="Lanz C."/>
            <person name="Linke B."/>
            <person name="McHardy A.C."/>
            <person name="Meyer F."/>
            <person name="Mittenhuber G."/>
            <person name="Nies D.H."/>
            <person name="Niesbach-Kloesgen U."/>
            <person name="Patschkowski T."/>
            <person name="Rueckert C."/>
            <person name="Rupp O."/>
            <person name="Schneiker S."/>
            <person name="Schuster S.C."/>
            <person name="Vorhoelter F.J."/>
            <person name="Weber E."/>
            <person name="Puehler A."/>
            <person name="Bonas U."/>
            <person name="Bartels D."/>
            <person name="Kaiser O."/>
        </authorList>
    </citation>
    <scope>NUCLEOTIDE SEQUENCE [LARGE SCALE GENOMIC DNA]</scope>
    <source>
        <strain>85-10</strain>
    </source>
</reference>
<gene>
    <name evidence="1" type="primary">adk</name>
    <name type="ordered locus">XCV3553</name>
</gene>
<organism>
    <name type="scientific">Xanthomonas euvesicatoria pv. vesicatoria (strain 85-10)</name>
    <name type="common">Xanthomonas campestris pv. vesicatoria</name>
    <dbReference type="NCBI Taxonomy" id="316273"/>
    <lineage>
        <taxon>Bacteria</taxon>
        <taxon>Pseudomonadati</taxon>
        <taxon>Pseudomonadota</taxon>
        <taxon>Gammaproteobacteria</taxon>
        <taxon>Lysobacterales</taxon>
        <taxon>Lysobacteraceae</taxon>
        <taxon>Xanthomonas</taxon>
    </lineage>
</organism>
<evidence type="ECO:0000255" key="1">
    <source>
        <dbReference type="HAMAP-Rule" id="MF_00235"/>
    </source>
</evidence>